<reference key="1">
    <citation type="journal article" date="2006" name="Proc. Natl. Acad. Sci. U.S.A.">
        <title>Comparative genomics of the lactic acid bacteria.</title>
        <authorList>
            <person name="Makarova K.S."/>
            <person name="Slesarev A."/>
            <person name="Wolf Y.I."/>
            <person name="Sorokin A."/>
            <person name="Mirkin B."/>
            <person name="Koonin E.V."/>
            <person name="Pavlov A."/>
            <person name="Pavlova N."/>
            <person name="Karamychev V."/>
            <person name="Polouchine N."/>
            <person name="Shakhova V."/>
            <person name="Grigoriev I."/>
            <person name="Lou Y."/>
            <person name="Rohksar D."/>
            <person name="Lucas S."/>
            <person name="Huang K."/>
            <person name="Goodstein D.M."/>
            <person name="Hawkins T."/>
            <person name="Plengvidhya V."/>
            <person name="Welker D."/>
            <person name="Hughes J."/>
            <person name="Goh Y."/>
            <person name="Benson A."/>
            <person name="Baldwin K."/>
            <person name="Lee J.-H."/>
            <person name="Diaz-Muniz I."/>
            <person name="Dosti B."/>
            <person name="Smeianov V."/>
            <person name="Wechter W."/>
            <person name="Barabote R."/>
            <person name="Lorca G."/>
            <person name="Altermann E."/>
            <person name="Barrangou R."/>
            <person name="Ganesan B."/>
            <person name="Xie Y."/>
            <person name="Rawsthorne H."/>
            <person name="Tamir D."/>
            <person name="Parker C."/>
            <person name="Breidt F."/>
            <person name="Broadbent J.R."/>
            <person name="Hutkins R."/>
            <person name="O'Sullivan D."/>
            <person name="Steele J."/>
            <person name="Unlu G."/>
            <person name="Saier M.H. Jr."/>
            <person name="Klaenhammer T."/>
            <person name="Richardson P."/>
            <person name="Kozyavkin S."/>
            <person name="Weimer B.C."/>
            <person name="Mills D.A."/>
        </authorList>
    </citation>
    <scope>NUCLEOTIDE SEQUENCE [LARGE SCALE GENOMIC DNA]</scope>
    <source>
        <strain>ATCC 8293 / DSM 20343 / BCRC 11652 / CCM 1803 / JCM 6124 / NCDO 523 / NBRC 100496 / NCIMB 8023 / NCTC 12954 / NRRL B-1118 / 37Y</strain>
    </source>
</reference>
<proteinExistence type="inferred from homology"/>
<dbReference type="EC" id="2.1.3.2" evidence="1"/>
<dbReference type="EMBL" id="CP000414">
    <property type="protein sequence ID" value="ABJ62308.1"/>
    <property type="molecule type" value="Genomic_DNA"/>
</dbReference>
<dbReference type="RefSeq" id="WP_011679936.1">
    <property type="nucleotide sequence ID" value="NC_008531.1"/>
</dbReference>
<dbReference type="SMR" id="Q03WW4"/>
<dbReference type="EnsemblBacteria" id="ABJ62308">
    <property type="protein sequence ID" value="ABJ62308"/>
    <property type="gene ID" value="LEUM_1210"/>
</dbReference>
<dbReference type="GeneID" id="29575765"/>
<dbReference type="KEGG" id="lme:LEUM_1210"/>
<dbReference type="eggNOG" id="COG0540">
    <property type="taxonomic scope" value="Bacteria"/>
</dbReference>
<dbReference type="HOGENOM" id="CLU_043846_2_1_9"/>
<dbReference type="UniPathway" id="UPA00070">
    <property type="reaction ID" value="UER00116"/>
</dbReference>
<dbReference type="Proteomes" id="UP000000362">
    <property type="component" value="Chromosome"/>
</dbReference>
<dbReference type="GO" id="GO:0005829">
    <property type="term" value="C:cytosol"/>
    <property type="evidence" value="ECO:0007669"/>
    <property type="project" value="TreeGrafter"/>
</dbReference>
<dbReference type="GO" id="GO:0016597">
    <property type="term" value="F:amino acid binding"/>
    <property type="evidence" value="ECO:0007669"/>
    <property type="project" value="InterPro"/>
</dbReference>
<dbReference type="GO" id="GO:0004070">
    <property type="term" value="F:aspartate carbamoyltransferase activity"/>
    <property type="evidence" value="ECO:0007669"/>
    <property type="project" value="UniProtKB-UniRule"/>
</dbReference>
<dbReference type="GO" id="GO:0006207">
    <property type="term" value="P:'de novo' pyrimidine nucleobase biosynthetic process"/>
    <property type="evidence" value="ECO:0007669"/>
    <property type="project" value="InterPro"/>
</dbReference>
<dbReference type="GO" id="GO:0044205">
    <property type="term" value="P:'de novo' UMP biosynthetic process"/>
    <property type="evidence" value="ECO:0007669"/>
    <property type="project" value="UniProtKB-UniRule"/>
</dbReference>
<dbReference type="GO" id="GO:0006520">
    <property type="term" value="P:amino acid metabolic process"/>
    <property type="evidence" value="ECO:0007669"/>
    <property type="project" value="InterPro"/>
</dbReference>
<dbReference type="FunFam" id="3.40.50.1370:FF:000011">
    <property type="entry name" value="Aspartate carbamoyltransferase"/>
    <property type="match status" value="1"/>
</dbReference>
<dbReference type="Gene3D" id="3.40.50.1370">
    <property type="entry name" value="Aspartate/ornithine carbamoyltransferase"/>
    <property type="match status" value="2"/>
</dbReference>
<dbReference type="HAMAP" id="MF_00001">
    <property type="entry name" value="Asp_carb_tr"/>
    <property type="match status" value="1"/>
</dbReference>
<dbReference type="InterPro" id="IPR006132">
    <property type="entry name" value="Asp/Orn_carbamoyltranf_P-bd"/>
</dbReference>
<dbReference type="InterPro" id="IPR006130">
    <property type="entry name" value="Asp/Orn_carbamoylTrfase"/>
</dbReference>
<dbReference type="InterPro" id="IPR036901">
    <property type="entry name" value="Asp/Orn_carbamoylTrfase_sf"/>
</dbReference>
<dbReference type="InterPro" id="IPR002082">
    <property type="entry name" value="Asp_carbamoyltransf"/>
</dbReference>
<dbReference type="InterPro" id="IPR006131">
    <property type="entry name" value="Asp_carbamoyltransf_Asp/Orn-bd"/>
</dbReference>
<dbReference type="NCBIfam" id="TIGR00670">
    <property type="entry name" value="asp_carb_tr"/>
    <property type="match status" value="1"/>
</dbReference>
<dbReference type="NCBIfam" id="NF002032">
    <property type="entry name" value="PRK00856.1"/>
    <property type="match status" value="1"/>
</dbReference>
<dbReference type="PANTHER" id="PTHR45753:SF6">
    <property type="entry name" value="ASPARTATE CARBAMOYLTRANSFERASE"/>
    <property type="match status" value="1"/>
</dbReference>
<dbReference type="PANTHER" id="PTHR45753">
    <property type="entry name" value="ORNITHINE CARBAMOYLTRANSFERASE, MITOCHONDRIAL"/>
    <property type="match status" value="1"/>
</dbReference>
<dbReference type="Pfam" id="PF00185">
    <property type="entry name" value="OTCace"/>
    <property type="match status" value="1"/>
</dbReference>
<dbReference type="Pfam" id="PF02729">
    <property type="entry name" value="OTCace_N"/>
    <property type="match status" value="1"/>
</dbReference>
<dbReference type="PRINTS" id="PR00100">
    <property type="entry name" value="AOTCASE"/>
</dbReference>
<dbReference type="PRINTS" id="PR00101">
    <property type="entry name" value="ATCASE"/>
</dbReference>
<dbReference type="SUPFAM" id="SSF53671">
    <property type="entry name" value="Aspartate/ornithine carbamoyltransferase"/>
    <property type="match status" value="1"/>
</dbReference>
<dbReference type="PROSITE" id="PS00097">
    <property type="entry name" value="CARBAMOYLTRANSFERASE"/>
    <property type="match status" value="1"/>
</dbReference>
<keyword id="KW-0665">Pyrimidine biosynthesis</keyword>
<keyword id="KW-1185">Reference proteome</keyword>
<keyword id="KW-0808">Transferase</keyword>
<sequence length="297" mass="33605">MRNYLNINAINKNDVLHLIQRALALKSGEQPKTKSITAVNLFFENSTRTHSSFQMAENQLNWKQIQIDPQTSSMTKGESLVDTLKTLKAIGVDVAVIRHSQNSWYENVLRSEGHAIPQLVNAGDGSGQHPSQSLLDLVTIYQEFGHFEGLKVRIIGDLAHSRVARSNAEILNKLGATVTFSGPKDWQPVDFDSFGEHVDLDVGWSEQDVVMFLRVQHERITHTENQNFSAKKYHEVYGLTESRYENLKENSIIMHPAPVNRDVEIADDLVEAPKSRIFDQMTNGVYARMAILEYVTE</sequence>
<organism>
    <name type="scientific">Leuconostoc mesenteroides subsp. mesenteroides (strain ATCC 8293 / DSM 20343 / BCRC 11652 / CCM 1803 / JCM 6124 / NCDO 523 / NBRC 100496 / NCIMB 8023 / NCTC 12954 / NRRL B-1118 / 37Y)</name>
    <dbReference type="NCBI Taxonomy" id="203120"/>
    <lineage>
        <taxon>Bacteria</taxon>
        <taxon>Bacillati</taxon>
        <taxon>Bacillota</taxon>
        <taxon>Bacilli</taxon>
        <taxon>Lactobacillales</taxon>
        <taxon>Lactobacillaceae</taxon>
        <taxon>Leuconostoc</taxon>
    </lineage>
</organism>
<feature type="chain" id="PRO_0000301585" description="Aspartate carbamoyltransferase catalytic subunit">
    <location>
        <begin position="1"/>
        <end position="297"/>
    </location>
</feature>
<feature type="binding site" evidence="1">
    <location>
        <position position="48"/>
    </location>
    <ligand>
        <name>carbamoyl phosphate</name>
        <dbReference type="ChEBI" id="CHEBI:58228"/>
    </ligand>
</feature>
<feature type="binding site" evidence="1">
    <location>
        <position position="49"/>
    </location>
    <ligand>
        <name>carbamoyl phosphate</name>
        <dbReference type="ChEBI" id="CHEBI:58228"/>
    </ligand>
</feature>
<feature type="binding site" evidence="1">
    <location>
        <position position="76"/>
    </location>
    <ligand>
        <name>L-aspartate</name>
        <dbReference type="ChEBI" id="CHEBI:29991"/>
    </ligand>
</feature>
<feature type="binding site" evidence="1">
    <location>
        <position position="98"/>
    </location>
    <ligand>
        <name>carbamoyl phosphate</name>
        <dbReference type="ChEBI" id="CHEBI:58228"/>
    </ligand>
</feature>
<feature type="binding site" evidence="1">
    <location>
        <position position="129"/>
    </location>
    <ligand>
        <name>carbamoyl phosphate</name>
        <dbReference type="ChEBI" id="CHEBI:58228"/>
    </ligand>
</feature>
<feature type="binding site" evidence="1">
    <location>
        <position position="132"/>
    </location>
    <ligand>
        <name>carbamoyl phosphate</name>
        <dbReference type="ChEBI" id="CHEBI:58228"/>
    </ligand>
</feature>
<feature type="binding site" evidence="1">
    <location>
        <position position="162"/>
    </location>
    <ligand>
        <name>L-aspartate</name>
        <dbReference type="ChEBI" id="CHEBI:29991"/>
    </ligand>
</feature>
<feature type="binding site" evidence="1">
    <location>
        <position position="214"/>
    </location>
    <ligand>
        <name>L-aspartate</name>
        <dbReference type="ChEBI" id="CHEBI:29991"/>
    </ligand>
</feature>
<feature type="binding site" evidence="1">
    <location>
        <position position="257"/>
    </location>
    <ligand>
        <name>carbamoyl phosphate</name>
        <dbReference type="ChEBI" id="CHEBI:58228"/>
    </ligand>
</feature>
<feature type="binding site" evidence="1">
    <location>
        <position position="258"/>
    </location>
    <ligand>
        <name>carbamoyl phosphate</name>
        <dbReference type="ChEBI" id="CHEBI:58228"/>
    </ligand>
</feature>
<accession>Q03WW4</accession>
<comment type="function">
    <text evidence="1">Catalyzes the condensation of carbamoyl phosphate and aspartate to form carbamoyl aspartate and inorganic phosphate, the committed step in the de novo pyrimidine nucleotide biosynthesis pathway.</text>
</comment>
<comment type="catalytic activity">
    <reaction evidence="1">
        <text>carbamoyl phosphate + L-aspartate = N-carbamoyl-L-aspartate + phosphate + H(+)</text>
        <dbReference type="Rhea" id="RHEA:20013"/>
        <dbReference type="ChEBI" id="CHEBI:15378"/>
        <dbReference type="ChEBI" id="CHEBI:29991"/>
        <dbReference type="ChEBI" id="CHEBI:32814"/>
        <dbReference type="ChEBI" id="CHEBI:43474"/>
        <dbReference type="ChEBI" id="CHEBI:58228"/>
        <dbReference type="EC" id="2.1.3.2"/>
    </reaction>
</comment>
<comment type="pathway">
    <text evidence="1">Pyrimidine metabolism; UMP biosynthesis via de novo pathway; (S)-dihydroorotate from bicarbonate: step 2/3.</text>
</comment>
<comment type="subunit">
    <text evidence="1">Heterododecamer (2C3:3R2) of six catalytic PyrB chains organized as two trimers (C3), and six regulatory PyrI chains organized as three dimers (R2).</text>
</comment>
<comment type="similarity">
    <text evidence="1">Belongs to the aspartate/ornithine carbamoyltransferase superfamily. ATCase family.</text>
</comment>
<name>PYRB_LEUMM</name>
<gene>
    <name evidence="1" type="primary">pyrB</name>
    <name type="ordered locus">LEUM_1210</name>
</gene>
<protein>
    <recommendedName>
        <fullName evidence="1">Aspartate carbamoyltransferase catalytic subunit</fullName>
        <ecNumber evidence="1">2.1.3.2</ecNumber>
    </recommendedName>
    <alternativeName>
        <fullName evidence="1">Aspartate transcarbamylase</fullName>
        <shortName evidence="1">ATCase</shortName>
    </alternativeName>
</protein>
<evidence type="ECO:0000255" key="1">
    <source>
        <dbReference type="HAMAP-Rule" id="MF_00001"/>
    </source>
</evidence>